<sequence length="334" mass="37278">MIEADRLIAPENPSFREEDVIDRAIRPKKLADYQGQDHVRDQMEIFIKAAQLRNEALDHLLIFGPPGLGKTTLANIVANEMEVNIRTTSGPVLEKAGDLAALLTNLEENDVLFIDEIHRLSPMVEEVLYPAMEDYQLDIMIGEGPAARSIKIDLPPFTLIGATTRAGSLTSPLRDRFGITQRLEYYKVKDLQDIVQRSADCLGLSMESEGALEVARRARGTPRIANRLLRRVRDYAEVKGNGHICADTADKALNMLDVDAEGFDYMDRKLLLAIMEKFGGGPVGLDNMAAAIGEEKDTIEDVLEPYLIQQGYLQRTPRGRIATDRAYLHFGIEK</sequence>
<accession>A7N1I0</accession>
<name>RUVB_VIBC1</name>
<proteinExistence type="inferred from homology"/>
<evidence type="ECO:0000255" key="1">
    <source>
        <dbReference type="HAMAP-Rule" id="MF_00016"/>
    </source>
</evidence>
<reference key="1">
    <citation type="submission" date="2007-08" db="EMBL/GenBank/DDBJ databases">
        <authorList>
            <consortium name="The Vibrio harveyi Genome Sequencing Project"/>
            <person name="Bassler B."/>
            <person name="Clifton S.W."/>
            <person name="Fulton L."/>
            <person name="Delehaunty K."/>
            <person name="Fronick C."/>
            <person name="Harrison M."/>
            <person name="Markivic C."/>
            <person name="Fulton R."/>
            <person name="Tin-Wollam A.-M."/>
            <person name="Shah N."/>
            <person name="Pepin K."/>
            <person name="Nash W."/>
            <person name="Thiruvilangam P."/>
            <person name="Bhonagiri V."/>
            <person name="Waters C."/>
            <person name="Tu K.C."/>
            <person name="Irgon J."/>
            <person name="Wilson R.K."/>
        </authorList>
    </citation>
    <scope>NUCLEOTIDE SEQUENCE [LARGE SCALE GENOMIC DNA]</scope>
    <source>
        <strain>ATCC BAA-1116 / BB120</strain>
    </source>
</reference>
<keyword id="KW-0067">ATP-binding</keyword>
<keyword id="KW-0963">Cytoplasm</keyword>
<keyword id="KW-0227">DNA damage</keyword>
<keyword id="KW-0233">DNA recombination</keyword>
<keyword id="KW-0234">DNA repair</keyword>
<keyword id="KW-0238">DNA-binding</keyword>
<keyword id="KW-0378">Hydrolase</keyword>
<keyword id="KW-0547">Nucleotide-binding</keyword>
<protein>
    <recommendedName>
        <fullName evidence="1">Holliday junction branch migration complex subunit RuvB</fullName>
        <ecNumber evidence="1">3.6.4.-</ecNumber>
    </recommendedName>
</protein>
<comment type="function">
    <text evidence="1">The RuvA-RuvB-RuvC complex processes Holliday junction (HJ) DNA during genetic recombination and DNA repair, while the RuvA-RuvB complex plays an important role in the rescue of blocked DNA replication forks via replication fork reversal (RFR). RuvA specifically binds to HJ cruciform DNA, conferring on it an open structure. The RuvB hexamer acts as an ATP-dependent pump, pulling dsDNA into and through the RuvAB complex. RuvB forms 2 homohexamers on either side of HJ DNA bound by 1 or 2 RuvA tetramers; 4 subunits per hexamer contact DNA at a time. Coordinated motions by a converter formed by DNA-disengaged RuvB subunits stimulates ATP hydrolysis and nucleotide exchange. Immobilization of the converter enables RuvB to convert the ATP-contained energy into a lever motion, pulling 2 nucleotides of DNA out of the RuvA tetramer per ATP hydrolyzed, thus driving DNA branch migration. The RuvB motors rotate together with the DNA substrate, which together with the progressing nucleotide cycle form the mechanistic basis for DNA recombination by continuous HJ branch migration. Branch migration allows RuvC to scan DNA until it finds its consensus sequence, where it cleaves and resolves cruciform DNA.</text>
</comment>
<comment type="catalytic activity">
    <reaction evidence="1">
        <text>ATP + H2O = ADP + phosphate + H(+)</text>
        <dbReference type="Rhea" id="RHEA:13065"/>
        <dbReference type="ChEBI" id="CHEBI:15377"/>
        <dbReference type="ChEBI" id="CHEBI:15378"/>
        <dbReference type="ChEBI" id="CHEBI:30616"/>
        <dbReference type="ChEBI" id="CHEBI:43474"/>
        <dbReference type="ChEBI" id="CHEBI:456216"/>
    </reaction>
</comment>
<comment type="subunit">
    <text evidence="1">Homohexamer. Forms an RuvA(8)-RuvB(12)-Holliday junction (HJ) complex. HJ DNA is sandwiched between 2 RuvA tetramers; dsDNA enters through RuvA and exits via RuvB. An RuvB hexamer assembles on each DNA strand where it exits the tetramer. Each RuvB hexamer is contacted by two RuvA subunits (via domain III) on 2 adjacent RuvB subunits; this complex drives branch migration. In the full resolvosome a probable DNA-RuvA(4)-RuvB(12)-RuvC(2) complex forms which resolves the HJ.</text>
</comment>
<comment type="subcellular location">
    <subcellularLocation>
        <location evidence="1">Cytoplasm</location>
    </subcellularLocation>
</comment>
<comment type="domain">
    <text evidence="1">Has 3 domains, the large (RuvB-L) and small ATPase (RuvB-S) domains and the C-terminal head (RuvB-H) domain. The head domain binds DNA, while the ATPase domains jointly bind ATP, ADP or are empty depending on the state of the subunit in the translocation cycle. During a single DNA translocation step the structure of each domain remains the same, but their relative positions change.</text>
</comment>
<comment type="similarity">
    <text evidence="1">Belongs to the RuvB family.</text>
</comment>
<dbReference type="EC" id="3.6.4.-" evidence="1"/>
<dbReference type="EMBL" id="CP000789">
    <property type="protein sequence ID" value="ABU70571.1"/>
    <property type="molecule type" value="Genomic_DNA"/>
</dbReference>
<dbReference type="RefSeq" id="WP_005426235.1">
    <property type="nucleotide sequence ID" value="NC_022269.1"/>
</dbReference>
<dbReference type="SMR" id="A7N1I0"/>
<dbReference type="KEGG" id="vha:VIBHAR_01601"/>
<dbReference type="PATRIC" id="fig|338187.25.peg.1061"/>
<dbReference type="Proteomes" id="UP000008152">
    <property type="component" value="Chromosome I"/>
</dbReference>
<dbReference type="GO" id="GO:0005737">
    <property type="term" value="C:cytoplasm"/>
    <property type="evidence" value="ECO:0007669"/>
    <property type="project" value="UniProtKB-SubCell"/>
</dbReference>
<dbReference type="GO" id="GO:0048476">
    <property type="term" value="C:Holliday junction resolvase complex"/>
    <property type="evidence" value="ECO:0007669"/>
    <property type="project" value="UniProtKB-UniRule"/>
</dbReference>
<dbReference type="GO" id="GO:0005524">
    <property type="term" value="F:ATP binding"/>
    <property type="evidence" value="ECO:0007669"/>
    <property type="project" value="UniProtKB-UniRule"/>
</dbReference>
<dbReference type="GO" id="GO:0016887">
    <property type="term" value="F:ATP hydrolysis activity"/>
    <property type="evidence" value="ECO:0007669"/>
    <property type="project" value="InterPro"/>
</dbReference>
<dbReference type="GO" id="GO:0000400">
    <property type="term" value="F:four-way junction DNA binding"/>
    <property type="evidence" value="ECO:0007669"/>
    <property type="project" value="UniProtKB-UniRule"/>
</dbReference>
<dbReference type="GO" id="GO:0009378">
    <property type="term" value="F:four-way junction helicase activity"/>
    <property type="evidence" value="ECO:0007669"/>
    <property type="project" value="InterPro"/>
</dbReference>
<dbReference type="GO" id="GO:0006310">
    <property type="term" value="P:DNA recombination"/>
    <property type="evidence" value="ECO:0007669"/>
    <property type="project" value="UniProtKB-UniRule"/>
</dbReference>
<dbReference type="GO" id="GO:0006281">
    <property type="term" value="P:DNA repair"/>
    <property type="evidence" value="ECO:0007669"/>
    <property type="project" value="UniProtKB-UniRule"/>
</dbReference>
<dbReference type="CDD" id="cd00009">
    <property type="entry name" value="AAA"/>
    <property type="match status" value="1"/>
</dbReference>
<dbReference type="FunFam" id="1.10.10.10:FF:000086">
    <property type="entry name" value="Holliday junction ATP-dependent DNA helicase RuvB"/>
    <property type="match status" value="1"/>
</dbReference>
<dbReference type="FunFam" id="1.10.8.60:FF:000023">
    <property type="entry name" value="Holliday junction ATP-dependent DNA helicase RuvB"/>
    <property type="match status" value="1"/>
</dbReference>
<dbReference type="FunFam" id="3.40.50.300:FF:000073">
    <property type="entry name" value="Holliday junction ATP-dependent DNA helicase RuvB"/>
    <property type="match status" value="1"/>
</dbReference>
<dbReference type="Gene3D" id="1.10.8.60">
    <property type="match status" value="1"/>
</dbReference>
<dbReference type="Gene3D" id="3.40.50.300">
    <property type="entry name" value="P-loop containing nucleotide triphosphate hydrolases"/>
    <property type="match status" value="1"/>
</dbReference>
<dbReference type="Gene3D" id="1.10.10.10">
    <property type="entry name" value="Winged helix-like DNA-binding domain superfamily/Winged helix DNA-binding domain"/>
    <property type="match status" value="1"/>
</dbReference>
<dbReference type="HAMAP" id="MF_00016">
    <property type="entry name" value="DNA_HJ_migration_RuvB"/>
    <property type="match status" value="1"/>
</dbReference>
<dbReference type="InterPro" id="IPR003593">
    <property type="entry name" value="AAA+_ATPase"/>
</dbReference>
<dbReference type="InterPro" id="IPR041445">
    <property type="entry name" value="AAA_lid_4"/>
</dbReference>
<dbReference type="InterPro" id="IPR004605">
    <property type="entry name" value="DNA_helicase_Holl-junc_RuvB"/>
</dbReference>
<dbReference type="InterPro" id="IPR027417">
    <property type="entry name" value="P-loop_NTPase"/>
</dbReference>
<dbReference type="InterPro" id="IPR008824">
    <property type="entry name" value="RuvB-like_N"/>
</dbReference>
<dbReference type="InterPro" id="IPR008823">
    <property type="entry name" value="RuvB_C"/>
</dbReference>
<dbReference type="InterPro" id="IPR036388">
    <property type="entry name" value="WH-like_DNA-bd_sf"/>
</dbReference>
<dbReference type="InterPro" id="IPR036390">
    <property type="entry name" value="WH_DNA-bd_sf"/>
</dbReference>
<dbReference type="NCBIfam" id="NF000868">
    <property type="entry name" value="PRK00080.1"/>
    <property type="match status" value="1"/>
</dbReference>
<dbReference type="NCBIfam" id="TIGR00635">
    <property type="entry name" value="ruvB"/>
    <property type="match status" value="1"/>
</dbReference>
<dbReference type="PANTHER" id="PTHR42848">
    <property type="match status" value="1"/>
</dbReference>
<dbReference type="PANTHER" id="PTHR42848:SF1">
    <property type="entry name" value="HOLLIDAY JUNCTION BRANCH MIGRATION COMPLEX SUBUNIT RUVB"/>
    <property type="match status" value="1"/>
</dbReference>
<dbReference type="Pfam" id="PF17864">
    <property type="entry name" value="AAA_lid_4"/>
    <property type="match status" value="1"/>
</dbReference>
<dbReference type="Pfam" id="PF05491">
    <property type="entry name" value="RuvB_C"/>
    <property type="match status" value="1"/>
</dbReference>
<dbReference type="Pfam" id="PF05496">
    <property type="entry name" value="RuvB_N"/>
    <property type="match status" value="1"/>
</dbReference>
<dbReference type="SMART" id="SM00382">
    <property type="entry name" value="AAA"/>
    <property type="match status" value="1"/>
</dbReference>
<dbReference type="SUPFAM" id="SSF52540">
    <property type="entry name" value="P-loop containing nucleoside triphosphate hydrolases"/>
    <property type="match status" value="1"/>
</dbReference>
<dbReference type="SUPFAM" id="SSF46785">
    <property type="entry name" value="Winged helix' DNA-binding domain"/>
    <property type="match status" value="1"/>
</dbReference>
<organism>
    <name type="scientific">Vibrio campbellii (strain ATCC BAA-1116)</name>
    <dbReference type="NCBI Taxonomy" id="2902295"/>
    <lineage>
        <taxon>Bacteria</taxon>
        <taxon>Pseudomonadati</taxon>
        <taxon>Pseudomonadota</taxon>
        <taxon>Gammaproteobacteria</taxon>
        <taxon>Vibrionales</taxon>
        <taxon>Vibrionaceae</taxon>
        <taxon>Vibrio</taxon>
    </lineage>
</organism>
<gene>
    <name evidence="1" type="primary">ruvB</name>
    <name type="ordered locus">VIBHAR_01601</name>
</gene>
<feature type="chain" id="PRO_1000001498" description="Holliday junction branch migration complex subunit RuvB">
    <location>
        <begin position="1"/>
        <end position="334"/>
    </location>
</feature>
<feature type="region of interest" description="Large ATPase domain (RuvB-L)" evidence="1">
    <location>
        <begin position="4"/>
        <end position="186"/>
    </location>
</feature>
<feature type="region of interest" description="Small ATPAse domain (RuvB-S)" evidence="1">
    <location>
        <begin position="187"/>
        <end position="257"/>
    </location>
</feature>
<feature type="region of interest" description="Head domain (RuvB-H)" evidence="1">
    <location>
        <begin position="260"/>
        <end position="334"/>
    </location>
</feature>
<feature type="binding site" evidence="1">
    <location>
        <position position="25"/>
    </location>
    <ligand>
        <name>ATP</name>
        <dbReference type="ChEBI" id="CHEBI:30616"/>
    </ligand>
</feature>
<feature type="binding site" evidence="1">
    <location>
        <position position="26"/>
    </location>
    <ligand>
        <name>ATP</name>
        <dbReference type="ChEBI" id="CHEBI:30616"/>
    </ligand>
</feature>
<feature type="binding site" evidence="1">
    <location>
        <position position="67"/>
    </location>
    <ligand>
        <name>ATP</name>
        <dbReference type="ChEBI" id="CHEBI:30616"/>
    </ligand>
</feature>
<feature type="binding site" evidence="1">
    <location>
        <position position="70"/>
    </location>
    <ligand>
        <name>ATP</name>
        <dbReference type="ChEBI" id="CHEBI:30616"/>
    </ligand>
</feature>
<feature type="binding site" evidence="1">
    <location>
        <position position="71"/>
    </location>
    <ligand>
        <name>ATP</name>
        <dbReference type="ChEBI" id="CHEBI:30616"/>
    </ligand>
</feature>
<feature type="binding site" evidence="1">
    <location>
        <position position="71"/>
    </location>
    <ligand>
        <name>Mg(2+)</name>
        <dbReference type="ChEBI" id="CHEBI:18420"/>
    </ligand>
</feature>
<feature type="binding site" evidence="1">
    <location>
        <position position="72"/>
    </location>
    <ligand>
        <name>ATP</name>
        <dbReference type="ChEBI" id="CHEBI:30616"/>
    </ligand>
</feature>
<feature type="binding site" evidence="1">
    <location>
        <begin position="133"/>
        <end position="135"/>
    </location>
    <ligand>
        <name>ATP</name>
        <dbReference type="ChEBI" id="CHEBI:30616"/>
    </ligand>
</feature>
<feature type="binding site" evidence="1">
    <location>
        <position position="176"/>
    </location>
    <ligand>
        <name>ATP</name>
        <dbReference type="ChEBI" id="CHEBI:30616"/>
    </ligand>
</feature>
<feature type="binding site" evidence="1">
    <location>
        <position position="186"/>
    </location>
    <ligand>
        <name>ATP</name>
        <dbReference type="ChEBI" id="CHEBI:30616"/>
    </ligand>
</feature>
<feature type="binding site" evidence="1">
    <location>
        <position position="223"/>
    </location>
    <ligand>
        <name>ATP</name>
        <dbReference type="ChEBI" id="CHEBI:30616"/>
    </ligand>
</feature>
<feature type="binding site" evidence="1">
    <location>
        <position position="315"/>
    </location>
    <ligand>
        <name>DNA</name>
        <dbReference type="ChEBI" id="CHEBI:16991"/>
    </ligand>
</feature>
<feature type="binding site" evidence="1">
    <location>
        <position position="320"/>
    </location>
    <ligand>
        <name>DNA</name>
        <dbReference type="ChEBI" id="CHEBI:16991"/>
    </ligand>
</feature>